<gene>
    <name evidence="1" type="primary">nhaB</name>
    <name type="ordered locus">SARI_01133</name>
</gene>
<reference key="1">
    <citation type="submission" date="2007-11" db="EMBL/GenBank/DDBJ databases">
        <authorList>
            <consortium name="The Salmonella enterica serovar Arizonae Genome Sequencing Project"/>
            <person name="McClelland M."/>
            <person name="Sanderson E.K."/>
            <person name="Porwollik S."/>
            <person name="Spieth J."/>
            <person name="Clifton W.S."/>
            <person name="Fulton R."/>
            <person name="Chunyan W."/>
            <person name="Wollam A."/>
            <person name="Shah N."/>
            <person name="Pepin K."/>
            <person name="Bhonagiri V."/>
            <person name="Nash W."/>
            <person name="Johnson M."/>
            <person name="Thiruvilangam P."/>
            <person name="Wilson R."/>
        </authorList>
    </citation>
    <scope>NUCLEOTIDE SEQUENCE [LARGE SCALE GENOMIC DNA]</scope>
    <source>
        <strain>ATCC BAA-731 / CDC346-86 / RSK2980</strain>
    </source>
</reference>
<feature type="chain" id="PRO_0000333116" description="Na(+)/H(+) antiporter NhaB">
    <location>
        <begin position="1"/>
        <end position="514"/>
    </location>
</feature>
<feature type="transmembrane region" description="Helical" evidence="1">
    <location>
        <begin position="23"/>
        <end position="43"/>
    </location>
</feature>
<feature type="transmembrane region" description="Helical" evidence="1">
    <location>
        <begin position="52"/>
        <end position="72"/>
    </location>
</feature>
<feature type="transmembrane region" description="Helical" evidence="1">
    <location>
        <begin position="97"/>
        <end position="117"/>
    </location>
</feature>
<feature type="transmembrane region" description="Helical" evidence="1">
    <location>
        <begin position="120"/>
        <end position="140"/>
    </location>
</feature>
<feature type="transmembrane region" description="Helical" evidence="1">
    <location>
        <begin position="144"/>
        <end position="164"/>
    </location>
</feature>
<feature type="transmembrane region" description="Helical" evidence="1">
    <location>
        <begin position="202"/>
        <end position="222"/>
    </location>
</feature>
<feature type="transmembrane region" description="Helical" evidence="1">
    <location>
        <begin position="238"/>
        <end position="258"/>
    </location>
</feature>
<feature type="transmembrane region" description="Helical" evidence="1">
    <location>
        <begin position="303"/>
        <end position="323"/>
    </location>
</feature>
<feature type="transmembrane region" description="Helical" evidence="1">
    <location>
        <begin position="357"/>
        <end position="377"/>
    </location>
</feature>
<feature type="transmembrane region" description="Helical" evidence="1">
    <location>
        <begin position="391"/>
        <end position="411"/>
    </location>
</feature>
<feature type="transmembrane region" description="Helical" evidence="1">
    <location>
        <begin position="447"/>
        <end position="467"/>
    </location>
</feature>
<feature type="transmembrane region" description="Helical" evidence="1">
    <location>
        <begin position="475"/>
        <end position="495"/>
    </location>
</feature>
<organism>
    <name type="scientific">Salmonella arizonae (strain ATCC BAA-731 / CDC346-86 / RSK2980)</name>
    <dbReference type="NCBI Taxonomy" id="41514"/>
    <lineage>
        <taxon>Bacteria</taxon>
        <taxon>Pseudomonadati</taxon>
        <taxon>Pseudomonadota</taxon>
        <taxon>Gammaproteobacteria</taxon>
        <taxon>Enterobacterales</taxon>
        <taxon>Enterobacteriaceae</taxon>
        <taxon>Salmonella</taxon>
    </lineage>
</organism>
<accession>A9MP57</accession>
<sequence>MEISWGRAMWRNFLGQSPDWYKLALLVFLIINPLTFFTNSFVAGWLLVAEFIFTLAMALKCYPLLPGGLLAIEAVVIGMTSAAHVREEVAANLEVLLLLMFMVAGIYFMKQLLLFIFTRLLLSIRSKMVLSLAFCVAAAFLSAFLDALTVVAVVISVAVGFYGIYHRVASSRGEENDMLDDSHIDQHYKTVLEQFRGFLRSLMMHAGVGTALGGVMTMVGEPQNLIIAKAAGWHFGDFFLRMSPVTVPVLVCGLLTCMLVEKMRWFGYGETLPEKVRNVLQQFDDQSRKQRTRQDKIKLIVQAIIGVWLVTALALHLAEVGLIGLSVIILATALTGVTDEHAIGKAFTESLPFTALLTVFFSIVAVIIDQHLFAPIIQFVLQASEHAQLTLFYLFNGLLSSISDNVFVGTIYINEAKAAMENGAISLKQFELLAVAINTGTNLPSVATPNGQAAFLFLLTSALAPLIRLSYGRMVWMALPYTIILTLVGLLCVEFTLAPVNEWMTQAGWLATLS</sequence>
<keyword id="KW-0050">Antiport</keyword>
<keyword id="KW-0997">Cell inner membrane</keyword>
<keyword id="KW-1003">Cell membrane</keyword>
<keyword id="KW-0406">Ion transport</keyword>
<keyword id="KW-0472">Membrane</keyword>
<keyword id="KW-1185">Reference proteome</keyword>
<keyword id="KW-0915">Sodium</keyword>
<keyword id="KW-0739">Sodium transport</keyword>
<keyword id="KW-0812">Transmembrane</keyword>
<keyword id="KW-1133">Transmembrane helix</keyword>
<keyword id="KW-0813">Transport</keyword>
<evidence type="ECO:0000255" key="1">
    <source>
        <dbReference type="HAMAP-Rule" id="MF_01599"/>
    </source>
</evidence>
<name>NHAB_SALAR</name>
<proteinExistence type="inferred from homology"/>
<comment type="function">
    <text evidence="1">Na(+)/H(+) antiporter that extrudes sodium in exchange for external protons.</text>
</comment>
<comment type="catalytic activity">
    <reaction evidence="1">
        <text>2 Na(+)(in) + 3 H(+)(out) = 2 Na(+)(out) + 3 H(+)(in)</text>
        <dbReference type="Rhea" id="RHEA:29247"/>
        <dbReference type="ChEBI" id="CHEBI:15378"/>
        <dbReference type="ChEBI" id="CHEBI:29101"/>
    </reaction>
    <physiologicalReaction direction="left-to-right" evidence="1">
        <dbReference type="Rhea" id="RHEA:29248"/>
    </physiologicalReaction>
</comment>
<comment type="subcellular location">
    <subcellularLocation>
        <location evidence="1">Cell inner membrane</location>
        <topology evidence="1">Multi-pass membrane protein</topology>
    </subcellularLocation>
</comment>
<comment type="similarity">
    <text evidence="1">Belongs to the NhaB Na(+)/H(+) (TC 2.A.34) antiporter family.</text>
</comment>
<protein>
    <recommendedName>
        <fullName evidence="1">Na(+)/H(+) antiporter NhaB</fullName>
    </recommendedName>
    <alternativeName>
        <fullName evidence="1">Sodium/proton antiporter NhaB</fullName>
    </alternativeName>
</protein>
<dbReference type="EMBL" id="CP000880">
    <property type="protein sequence ID" value="ABX21038.1"/>
    <property type="molecule type" value="Genomic_DNA"/>
</dbReference>
<dbReference type="SMR" id="A9MP57"/>
<dbReference type="STRING" id="41514.SARI_01133"/>
<dbReference type="KEGG" id="ses:SARI_01133"/>
<dbReference type="HOGENOM" id="CLU_041110_0_0_6"/>
<dbReference type="Proteomes" id="UP000002084">
    <property type="component" value="Chromosome"/>
</dbReference>
<dbReference type="GO" id="GO:0005886">
    <property type="term" value="C:plasma membrane"/>
    <property type="evidence" value="ECO:0007669"/>
    <property type="project" value="UniProtKB-SubCell"/>
</dbReference>
<dbReference type="GO" id="GO:0015385">
    <property type="term" value="F:sodium:proton antiporter activity"/>
    <property type="evidence" value="ECO:0007669"/>
    <property type="project" value="InterPro"/>
</dbReference>
<dbReference type="HAMAP" id="MF_01599">
    <property type="entry name" value="NhaB"/>
    <property type="match status" value="1"/>
</dbReference>
<dbReference type="InterPro" id="IPR004671">
    <property type="entry name" value="Na+/H+_antiporter_NhaB"/>
</dbReference>
<dbReference type="NCBIfam" id="TIGR00774">
    <property type="entry name" value="NhaB"/>
    <property type="match status" value="1"/>
</dbReference>
<dbReference type="NCBIfam" id="NF007093">
    <property type="entry name" value="PRK09547.1"/>
    <property type="match status" value="1"/>
</dbReference>
<dbReference type="PANTHER" id="PTHR43302:SF1">
    <property type="entry name" value="NA(+)_H(+) ANTIPORTER NHAB"/>
    <property type="match status" value="1"/>
</dbReference>
<dbReference type="PANTHER" id="PTHR43302">
    <property type="entry name" value="TRANSPORTER ARSB-RELATED"/>
    <property type="match status" value="1"/>
</dbReference>
<dbReference type="Pfam" id="PF06450">
    <property type="entry name" value="NhaB"/>
    <property type="match status" value="1"/>
</dbReference>